<name>BGLA_ASPFC</name>
<accession>B0XPE1</accession>
<reference key="1">
    <citation type="journal article" date="2008" name="PLoS Genet.">
        <title>Genomic islands in the pathogenic filamentous fungus Aspergillus fumigatus.</title>
        <authorList>
            <person name="Fedorova N.D."/>
            <person name="Khaldi N."/>
            <person name="Joardar V.S."/>
            <person name="Maiti R."/>
            <person name="Amedeo P."/>
            <person name="Anderson M.J."/>
            <person name="Crabtree J."/>
            <person name="Silva J.C."/>
            <person name="Badger J.H."/>
            <person name="Albarraq A."/>
            <person name="Angiuoli S."/>
            <person name="Bussey H."/>
            <person name="Bowyer P."/>
            <person name="Cotty P.J."/>
            <person name="Dyer P.S."/>
            <person name="Egan A."/>
            <person name="Galens K."/>
            <person name="Fraser-Liggett C.M."/>
            <person name="Haas B.J."/>
            <person name="Inman J.M."/>
            <person name="Kent R."/>
            <person name="Lemieux S."/>
            <person name="Malavazi I."/>
            <person name="Orvis J."/>
            <person name="Roemer T."/>
            <person name="Ronning C.M."/>
            <person name="Sundaram J.P."/>
            <person name="Sutton G."/>
            <person name="Turner G."/>
            <person name="Venter J.C."/>
            <person name="White O.R."/>
            <person name="Whitty B.R."/>
            <person name="Youngman P."/>
            <person name="Wolfe K.H."/>
            <person name="Goldman G.H."/>
            <person name="Wortman J.R."/>
            <person name="Jiang B."/>
            <person name="Denning D.W."/>
            <person name="Nierman W.C."/>
        </authorList>
    </citation>
    <scope>NUCLEOTIDE SEQUENCE [LARGE SCALE GENOMIC DNA]</scope>
    <source>
        <strain>CBS 144.89 / FGSC A1163 / CEA10</strain>
    </source>
</reference>
<dbReference type="EC" id="3.2.1.21"/>
<dbReference type="EMBL" id="DS499594">
    <property type="protein sequence ID" value="EDP55914.1"/>
    <property type="molecule type" value="Genomic_DNA"/>
</dbReference>
<dbReference type="SMR" id="B0XPE1"/>
<dbReference type="Allergome" id="8995">
    <property type="allergen name" value="Asp f Glucosidase"/>
</dbReference>
<dbReference type="GlyCosmos" id="B0XPE1">
    <property type="glycosylation" value="12 sites, No reported glycans"/>
</dbReference>
<dbReference type="EnsemblFungi" id="EDP55914">
    <property type="protein sequence ID" value="EDP55914"/>
    <property type="gene ID" value="AFUB_006160"/>
</dbReference>
<dbReference type="HOGENOM" id="CLU_004542_2_0_1"/>
<dbReference type="OrthoDB" id="25956at5052"/>
<dbReference type="PhylomeDB" id="B0XPE1"/>
<dbReference type="UniPathway" id="UPA00696"/>
<dbReference type="Proteomes" id="UP000001699">
    <property type="component" value="Unassembled WGS sequence"/>
</dbReference>
<dbReference type="GO" id="GO:0005576">
    <property type="term" value="C:extracellular region"/>
    <property type="evidence" value="ECO:0007669"/>
    <property type="project" value="UniProtKB-SubCell"/>
</dbReference>
<dbReference type="GO" id="GO:0008422">
    <property type="term" value="F:beta-glucosidase activity"/>
    <property type="evidence" value="ECO:0007669"/>
    <property type="project" value="UniProtKB-EC"/>
</dbReference>
<dbReference type="GO" id="GO:0030245">
    <property type="term" value="P:cellulose catabolic process"/>
    <property type="evidence" value="ECO:0007669"/>
    <property type="project" value="UniProtKB-UniPathway"/>
</dbReference>
<dbReference type="FunFam" id="2.60.40.10:FF:001391">
    <property type="entry name" value="Beta-glucosidase"/>
    <property type="match status" value="1"/>
</dbReference>
<dbReference type="FunFam" id="3.20.20.300:FF:000002">
    <property type="entry name" value="Probable beta-glucosidase"/>
    <property type="match status" value="1"/>
</dbReference>
<dbReference type="FunFam" id="3.40.50.1700:FF:000003">
    <property type="entry name" value="Probable beta-glucosidase"/>
    <property type="match status" value="1"/>
</dbReference>
<dbReference type="Gene3D" id="3.40.50.1700">
    <property type="entry name" value="Glycoside hydrolase family 3 C-terminal domain"/>
    <property type="match status" value="1"/>
</dbReference>
<dbReference type="Gene3D" id="3.20.20.300">
    <property type="entry name" value="Glycoside hydrolase, family 3, N-terminal domain"/>
    <property type="match status" value="1"/>
</dbReference>
<dbReference type="Gene3D" id="2.60.40.10">
    <property type="entry name" value="Immunoglobulins"/>
    <property type="match status" value="1"/>
</dbReference>
<dbReference type="InterPro" id="IPR050288">
    <property type="entry name" value="Cellulose_deg_GH3"/>
</dbReference>
<dbReference type="InterPro" id="IPR026891">
    <property type="entry name" value="Fn3-like"/>
</dbReference>
<dbReference type="InterPro" id="IPR019800">
    <property type="entry name" value="Glyco_hydro_3_AS"/>
</dbReference>
<dbReference type="InterPro" id="IPR002772">
    <property type="entry name" value="Glyco_hydro_3_C"/>
</dbReference>
<dbReference type="InterPro" id="IPR036881">
    <property type="entry name" value="Glyco_hydro_3_C_sf"/>
</dbReference>
<dbReference type="InterPro" id="IPR001764">
    <property type="entry name" value="Glyco_hydro_3_N"/>
</dbReference>
<dbReference type="InterPro" id="IPR036962">
    <property type="entry name" value="Glyco_hydro_3_N_sf"/>
</dbReference>
<dbReference type="InterPro" id="IPR017853">
    <property type="entry name" value="Glycoside_hydrolase_SF"/>
</dbReference>
<dbReference type="InterPro" id="IPR013783">
    <property type="entry name" value="Ig-like_fold"/>
</dbReference>
<dbReference type="PANTHER" id="PTHR42715">
    <property type="entry name" value="BETA-GLUCOSIDASE"/>
    <property type="match status" value="1"/>
</dbReference>
<dbReference type="PANTHER" id="PTHR42715:SF29">
    <property type="entry name" value="BETA-GLUCOSIDASE A-RELATED"/>
    <property type="match status" value="1"/>
</dbReference>
<dbReference type="Pfam" id="PF14310">
    <property type="entry name" value="Fn3-like"/>
    <property type="match status" value="1"/>
</dbReference>
<dbReference type="Pfam" id="PF00933">
    <property type="entry name" value="Glyco_hydro_3"/>
    <property type="match status" value="1"/>
</dbReference>
<dbReference type="Pfam" id="PF01915">
    <property type="entry name" value="Glyco_hydro_3_C"/>
    <property type="match status" value="1"/>
</dbReference>
<dbReference type="PRINTS" id="PR00133">
    <property type="entry name" value="GLHYDRLASE3"/>
</dbReference>
<dbReference type="SMART" id="SM01217">
    <property type="entry name" value="Fn3_like"/>
    <property type="match status" value="1"/>
</dbReference>
<dbReference type="SUPFAM" id="SSF51445">
    <property type="entry name" value="(Trans)glycosidases"/>
    <property type="match status" value="1"/>
</dbReference>
<dbReference type="SUPFAM" id="SSF52279">
    <property type="entry name" value="Beta-D-glucan exohydrolase, C-terminal domain"/>
    <property type="match status" value="1"/>
</dbReference>
<dbReference type="PROSITE" id="PS00775">
    <property type="entry name" value="GLYCOSYL_HYDROL_F3"/>
    <property type="match status" value="1"/>
</dbReference>
<gene>
    <name type="primary">bglA</name>
    <name type="synonym">bgl1</name>
    <name type="ORF">AFUB_006160</name>
</gene>
<comment type="function">
    <text evidence="1">Beta-glucosidases are one of a number of cellulolytic enzymes involved in the degradation of cellulosic biomass. Catalyzes the last step releasing glucose from the inhibitory cellobiose (By similarity).</text>
</comment>
<comment type="catalytic activity">
    <reaction>
        <text>Hydrolysis of terminal, non-reducing beta-D-glucosyl residues with release of beta-D-glucose.</text>
        <dbReference type="EC" id="3.2.1.21"/>
    </reaction>
</comment>
<comment type="pathway">
    <text>Glycan metabolism; cellulose degradation.</text>
</comment>
<comment type="subcellular location">
    <subcellularLocation>
        <location evidence="1">Secreted</location>
    </subcellularLocation>
</comment>
<comment type="similarity">
    <text evidence="4">Belongs to the glycosyl hydrolase 3 family.</text>
</comment>
<organism>
    <name type="scientific">Aspergillus fumigatus (strain CBS 144.89 / FGSC A1163 / CEA10)</name>
    <name type="common">Neosartorya fumigata</name>
    <dbReference type="NCBI Taxonomy" id="451804"/>
    <lineage>
        <taxon>Eukaryota</taxon>
        <taxon>Fungi</taxon>
        <taxon>Dikarya</taxon>
        <taxon>Ascomycota</taxon>
        <taxon>Pezizomycotina</taxon>
        <taxon>Eurotiomycetes</taxon>
        <taxon>Eurotiomycetidae</taxon>
        <taxon>Eurotiales</taxon>
        <taxon>Aspergillaceae</taxon>
        <taxon>Aspergillus</taxon>
        <taxon>Aspergillus subgen. Fumigati</taxon>
    </lineage>
</organism>
<evidence type="ECO:0000250" key="1"/>
<evidence type="ECO:0000255" key="2"/>
<evidence type="ECO:0000256" key="3">
    <source>
        <dbReference type="SAM" id="MobiDB-lite"/>
    </source>
</evidence>
<evidence type="ECO:0000305" key="4"/>
<protein>
    <recommendedName>
        <fullName>Probable beta-glucosidase A</fullName>
        <ecNumber>3.2.1.21</ecNumber>
    </recommendedName>
    <alternativeName>
        <fullName>Beta-D-glucoside glucohydrolase A</fullName>
    </alternativeName>
    <alternativeName>
        <fullName>Cellobiase A</fullName>
    </alternativeName>
    <alternativeName>
        <fullName>Gentiobiase A</fullName>
    </alternativeName>
</protein>
<sequence>MRFGWLEVAALTAASVANAQVFDNSHGNNQELAFSPPFYPSPWADGQGEWADAHRRAVEIVSQMTLAEKVNLTTGTGWEMDRCVGQTGSVPRLGINWGLCGQDSPLGIRFSDLNSAFPAGTNVAATWDKTLAYLRGKAMGEEFNDKGVDILLGPAAGPLGKYPDGGRIWEGFSPDPALTGVLFAETIKGIQDAGVIATAKHYILNEQEHFRQVGEAQGYGYNITETISSNVDDKTMHELYLWPFADAVRAGVGAVMCSYNQINNSYGCQNSQTLNKLLKAELGFQGFVMSDWSAHHSGVGAALAGLDMSMPGDISFDDGLSFWGTNLTVSVLNGTVPAWRVDDMAVRIMTAYYKVGRDRLRIPPNFSSWTRDEYGWEHSAVSEGAWTKVNDFVNVQRSHSQIIREIGAASTVLLKNTGALPLTGKEVKVGVLGEDAGSNPWGANGCPDRGCDNGTLAMAWGSGTANFPYLVTPEQAIQREVISNGGNVFAVTDNGALSQMADVASQSSVSLVFVNADSGEGFISVDGNEGDRKNLTLWKNGEAVIDTVVSHCNNTIVVIHSVGPVLIDRWYDNPNVTAIIWAGLPGQESGNSLVDVLYGRVNPSAKTPFTWGKTRESYGAPLLTEPNNGNGAPQDDFNEGVFIDYRHFDKRNETPIYEFGHGLSYTTFGYSHLRVQALNSSSSAYVPTSGETKPAPTYGEIGSAADYLYPEGLKRITKFIYPWLNSTDLEDSSDDPNYGWEDSEYIPEGARDGSPQPLLKAGGAPGGNPTLYQDLVRVSATITNTGNVAGYEVPQLYVSLGGPNEPRVVLRKFDRIFLAPGEQKVWTTTLNRRDLANWDVEAQDWVITKYPKKVHVGSSSRKLPLRAPLPRVY</sequence>
<keyword id="KW-0119">Carbohydrate metabolism</keyword>
<keyword id="KW-0136">Cellulose degradation</keyword>
<keyword id="KW-0325">Glycoprotein</keyword>
<keyword id="KW-0326">Glycosidase</keyword>
<keyword id="KW-0378">Hydrolase</keyword>
<keyword id="KW-0624">Polysaccharide degradation</keyword>
<keyword id="KW-0964">Secreted</keyword>
<keyword id="KW-0732">Signal</keyword>
<feature type="signal peptide" evidence="2">
    <location>
        <begin position="1"/>
        <end position="19"/>
    </location>
</feature>
<feature type="chain" id="PRO_0000394093" description="Probable beta-glucosidase A">
    <location>
        <begin position="20"/>
        <end position="873"/>
    </location>
</feature>
<feature type="region of interest" description="Disordered" evidence="3">
    <location>
        <begin position="731"/>
        <end position="764"/>
    </location>
</feature>
<feature type="active site" evidence="1">
    <location>
        <position position="291"/>
    </location>
</feature>
<feature type="glycosylation site" description="N-linked (GlcNAc...) asparagine" evidence="2">
    <location>
        <position position="71"/>
    </location>
</feature>
<feature type="glycosylation site" description="N-linked (GlcNAc...) asparagine" evidence="2">
    <location>
        <position position="222"/>
    </location>
</feature>
<feature type="glycosylation site" description="N-linked (GlcNAc...) asparagine" evidence="2">
    <location>
        <position position="263"/>
    </location>
</feature>
<feature type="glycosylation site" description="N-linked (GlcNAc...) asparagine" evidence="2">
    <location>
        <position position="326"/>
    </location>
</feature>
<feature type="glycosylation site" description="N-linked (GlcNAc...) asparagine" evidence="2">
    <location>
        <position position="333"/>
    </location>
</feature>
<feature type="glycosylation site" description="N-linked (GlcNAc...) asparagine" evidence="2">
    <location>
        <position position="365"/>
    </location>
</feature>
<feature type="glycosylation site" description="N-linked (GlcNAc...) asparagine" evidence="2">
    <location>
        <position position="453"/>
    </location>
</feature>
<feature type="glycosylation site" description="N-linked (GlcNAc...) asparagine" evidence="2">
    <location>
        <position position="534"/>
    </location>
</feature>
<feature type="glycosylation site" description="N-linked (GlcNAc...) asparagine" evidence="2">
    <location>
        <position position="553"/>
    </location>
</feature>
<feature type="glycosylation site" description="N-linked (GlcNAc...) asparagine" evidence="2">
    <location>
        <position position="575"/>
    </location>
</feature>
<feature type="glycosylation site" description="N-linked (GlcNAc...) asparagine" evidence="2">
    <location>
        <position position="679"/>
    </location>
</feature>
<feature type="glycosylation site" description="N-linked (GlcNAc...) asparagine" evidence="2">
    <location>
        <position position="725"/>
    </location>
</feature>
<proteinExistence type="inferred from homology"/>